<gene>
    <name type="ordered locus">AF_1360</name>
</gene>
<reference key="1">
    <citation type="journal article" date="1997" name="Nature">
        <title>The complete genome sequence of the hyperthermophilic, sulphate-reducing archaeon Archaeoglobus fulgidus.</title>
        <authorList>
            <person name="Klenk H.-P."/>
            <person name="Clayton R.A."/>
            <person name="Tomb J.-F."/>
            <person name="White O."/>
            <person name="Nelson K.E."/>
            <person name="Ketchum K.A."/>
            <person name="Dodson R.J."/>
            <person name="Gwinn M.L."/>
            <person name="Hickey E.K."/>
            <person name="Peterson J.D."/>
            <person name="Richardson D.L."/>
            <person name="Kerlavage A.R."/>
            <person name="Graham D.E."/>
            <person name="Kyrpides N.C."/>
            <person name="Fleischmann R.D."/>
            <person name="Quackenbush J."/>
            <person name="Lee N.H."/>
            <person name="Sutton G.G."/>
            <person name="Gill S.R."/>
            <person name="Kirkness E.F."/>
            <person name="Dougherty B.A."/>
            <person name="McKenney K."/>
            <person name="Adams M.D."/>
            <person name="Loftus B.J."/>
            <person name="Peterson S.N."/>
            <person name="Reich C.I."/>
            <person name="McNeil L.K."/>
            <person name="Badger J.H."/>
            <person name="Glodek A."/>
            <person name="Zhou L."/>
            <person name="Overbeek R."/>
            <person name="Gocayne J.D."/>
            <person name="Weidman J.F."/>
            <person name="McDonald L.A."/>
            <person name="Utterback T.R."/>
            <person name="Cotton M.D."/>
            <person name="Spriggs T."/>
            <person name="Artiach P."/>
            <person name="Kaine B.P."/>
            <person name="Sykes S.M."/>
            <person name="Sadow P.W."/>
            <person name="D'Andrea K.P."/>
            <person name="Bowman C."/>
            <person name="Fujii C."/>
            <person name="Garland S.A."/>
            <person name="Mason T.M."/>
            <person name="Olsen G.J."/>
            <person name="Fraser C.M."/>
            <person name="Smith H.O."/>
            <person name="Woese C.R."/>
            <person name="Venter J.C."/>
        </authorList>
    </citation>
    <scope>NUCLEOTIDE SEQUENCE [LARGE SCALE GENOMIC DNA]</scope>
    <source>
        <strain>ATCC 49558 / DSM 4304 / JCM 9628 / NBRC 100126 / VC-16</strain>
    </source>
</reference>
<proteinExistence type="inferred from homology"/>
<keyword id="KW-0963">Cytoplasm</keyword>
<keyword id="KW-0592">Phosphate transport</keyword>
<keyword id="KW-1185">Reference proteome</keyword>
<keyword id="KW-0813">Transport</keyword>
<evidence type="ECO:0000250" key="1"/>
<evidence type="ECO:0000305" key="2"/>
<accession>O28911</accession>
<comment type="function">
    <text evidence="1">Plays a role in the regulation of phosphate uptake.</text>
</comment>
<comment type="subunit">
    <text evidence="1">Homodimer.</text>
</comment>
<comment type="subcellular location">
    <subcellularLocation>
        <location evidence="1">Cytoplasm</location>
    </subcellularLocation>
</comment>
<comment type="similarity">
    <text evidence="2">Belongs to the PhoU family.</text>
</comment>
<name>PHOU_ARCFU</name>
<feature type="chain" id="PRO_0000155187" description="Phosphate-specific transport system accessory protein PhoU homolog">
    <location>
        <begin position="1"/>
        <end position="196"/>
    </location>
</feature>
<organism>
    <name type="scientific">Archaeoglobus fulgidus (strain ATCC 49558 / DSM 4304 / JCM 9628 / NBRC 100126 / VC-16)</name>
    <dbReference type="NCBI Taxonomy" id="224325"/>
    <lineage>
        <taxon>Archaea</taxon>
        <taxon>Methanobacteriati</taxon>
        <taxon>Methanobacteriota</taxon>
        <taxon>Archaeoglobi</taxon>
        <taxon>Archaeoglobales</taxon>
        <taxon>Archaeoglobaceae</taxon>
        <taxon>Archaeoglobus</taxon>
    </lineage>
</organism>
<protein>
    <recommendedName>
        <fullName>Phosphate-specific transport system accessory protein PhoU homolog</fullName>
        <shortName>Pst system accessory protein PhoU homolog</shortName>
    </recommendedName>
</protein>
<dbReference type="EMBL" id="AE000782">
    <property type="protein sequence ID" value="AAB89886.1"/>
    <property type="molecule type" value="Genomic_DNA"/>
</dbReference>
<dbReference type="PIR" id="G69419">
    <property type="entry name" value="G69419"/>
</dbReference>
<dbReference type="RefSeq" id="WP_010878857.1">
    <property type="nucleotide sequence ID" value="NC_000917.1"/>
</dbReference>
<dbReference type="SMR" id="O28911"/>
<dbReference type="STRING" id="224325.AF_1360"/>
<dbReference type="PaxDb" id="224325-AF_1360"/>
<dbReference type="EnsemblBacteria" id="AAB89886">
    <property type="protein sequence ID" value="AAB89886"/>
    <property type="gene ID" value="AF_1360"/>
</dbReference>
<dbReference type="GeneID" id="1484584"/>
<dbReference type="KEGG" id="afu:AF_1360"/>
<dbReference type="eggNOG" id="arCOG00232">
    <property type="taxonomic scope" value="Archaea"/>
</dbReference>
<dbReference type="HOGENOM" id="CLU_078518_3_0_2"/>
<dbReference type="OrthoDB" id="7738at2157"/>
<dbReference type="PhylomeDB" id="O28911"/>
<dbReference type="Proteomes" id="UP000002199">
    <property type="component" value="Chromosome"/>
</dbReference>
<dbReference type="GO" id="GO:0005737">
    <property type="term" value="C:cytoplasm"/>
    <property type="evidence" value="ECO:0000250"/>
    <property type="project" value="UniProtKB"/>
</dbReference>
<dbReference type="GO" id="GO:0042803">
    <property type="term" value="F:protein homodimerization activity"/>
    <property type="evidence" value="ECO:0000250"/>
    <property type="project" value="UniProtKB"/>
</dbReference>
<dbReference type="GO" id="GO:0030643">
    <property type="term" value="P:intracellular phosphate ion homeostasis"/>
    <property type="evidence" value="ECO:0007669"/>
    <property type="project" value="InterPro"/>
</dbReference>
<dbReference type="GO" id="GO:0045936">
    <property type="term" value="P:negative regulation of phosphate metabolic process"/>
    <property type="evidence" value="ECO:0000250"/>
    <property type="project" value="UniProtKB"/>
</dbReference>
<dbReference type="GO" id="GO:2000186">
    <property type="term" value="P:negative regulation of phosphate transmembrane transport"/>
    <property type="evidence" value="ECO:0000250"/>
    <property type="project" value="UniProtKB"/>
</dbReference>
<dbReference type="GO" id="GO:0006817">
    <property type="term" value="P:phosphate ion transport"/>
    <property type="evidence" value="ECO:0007669"/>
    <property type="project" value="UniProtKB-KW"/>
</dbReference>
<dbReference type="Gene3D" id="1.20.58.220">
    <property type="entry name" value="Phosphate transport system protein phou homolog 2, domain 2"/>
    <property type="match status" value="1"/>
</dbReference>
<dbReference type="InterPro" id="IPR028366">
    <property type="entry name" value="P_transport_PhoU"/>
</dbReference>
<dbReference type="InterPro" id="IPR038078">
    <property type="entry name" value="PhoU-like_sf"/>
</dbReference>
<dbReference type="InterPro" id="IPR026022">
    <property type="entry name" value="PhoU_dom"/>
</dbReference>
<dbReference type="NCBIfam" id="TIGR02135">
    <property type="entry name" value="phoU_full"/>
    <property type="match status" value="1"/>
</dbReference>
<dbReference type="PANTHER" id="PTHR42930">
    <property type="entry name" value="PHOSPHATE-SPECIFIC TRANSPORT SYSTEM ACCESSORY PROTEIN PHOU"/>
    <property type="match status" value="1"/>
</dbReference>
<dbReference type="PANTHER" id="PTHR42930:SF3">
    <property type="entry name" value="PHOSPHATE-SPECIFIC TRANSPORT SYSTEM ACCESSORY PROTEIN PHOU"/>
    <property type="match status" value="1"/>
</dbReference>
<dbReference type="Pfam" id="PF01895">
    <property type="entry name" value="PhoU"/>
    <property type="match status" value="2"/>
</dbReference>
<dbReference type="SUPFAM" id="SSF109755">
    <property type="entry name" value="PhoU-like"/>
    <property type="match status" value="1"/>
</dbReference>
<sequence>MKRIEEKEKAIMDEIMEMHALAEKAVELSFRAMRGDKSVVREISRIEQQTDVLDTDINYACTTFIALFQPVARDLRFAISIMRISSSYERIADIAQEISLYESKLPEIVFKAEKYLKKMFDAVKEGYTKTEGLKERMTELDNAVDEIYVEAIEQLEESCDVNAVLTVRHIERIGDLLAKIAARQIFIKEGRRVWII</sequence>